<feature type="chain" id="PRO_0000375133" description="B3 domain-containing protein At2g35310">
    <location>
        <begin position="1"/>
        <end position="288"/>
    </location>
</feature>
<feature type="DNA-binding region" description="TF-B3 1" evidence="1">
    <location>
        <begin position="19"/>
        <end position="114"/>
    </location>
</feature>
<feature type="DNA-binding region" description="TF-B3 2" evidence="1">
    <location>
        <begin position="196"/>
        <end position="288"/>
    </location>
</feature>
<feature type="sequence conflict" description="In Ref. 3; AAN72043." evidence="2" ref="3">
    <original>M</original>
    <variation>V</variation>
    <location>
        <position position="118"/>
    </location>
</feature>
<accession>Q5PNU4</accession>
<accession>O82163</accession>
<accession>Q8H0U7</accession>
<comment type="subcellular location">
    <subcellularLocation>
        <location evidence="1">Nucleus</location>
    </subcellularLocation>
</comment>
<comment type="sequence caution" evidence="2">
    <conflict type="erroneous gene model prediction">
        <sequence resource="EMBL-CDS" id="AAC61807"/>
    </conflict>
</comment>
<protein>
    <recommendedName>
        <fullName>B3 domain-containing protein At2g35310</fullName>
    </recommendedName>
</protein>
<proteinExistence type="evidence at transcript level"/>
<reference key="1">
    <citation type="journal article" date="1999" name="Nature">
        <title>Sequence and analysis of chromosome 2 of the plant Arabidopsis thaliana.</title>
        <authorList>
            <person name="Lin X."/>
            <person name="Kaul S."/>
            <person name="Rounsley S.D."/>
            <person name="Shea T.P."/>
            <person name="Benito M.-I."/>
            <person name="Town C.D."/>
            <person name="Fujii C.Y."/>
            <person name="Mason T.M."/>
            <person name="Bowman C.L."/>
            <person name="Barnstead M.E."/>
            <person name="Feldblyum T.V."/>
            <person name="Buell C.R."/>
            <person name="Ketchum K.A."/>
            <person name="Lee J.J."/>
            <person name="Ronning C.M."/>
            <person name="Koo H.L."/>
            <person name="Moffat K.S."/>
            <person name="Cronin L.A."/>
            <person name="Shen M."/>
            <person name="Pai G."/>
            <person name="Van Aken S."/>
            <person name="Umayam L."/>
            <person name="Tallon L.J."/>
            <person name="Gill J.E."/>
            <person name="Adams M.D."/>
            <person name="Carrera A.J."/>
            <person name="Creasy T.H."/>
            <person name="Goodman H.M."/>
            <person name="Somerville C.R."/>
            <person name="Copenhaver G.P."/>
            <person name="Preuss D."/>
            <person name="Nierman W.C."/>
            <person name="White O."/>
            <person name="Eisen J.A."/>
            <person name="Salzberg S.L."/>
            <person name="Fraser C.M."/>
            <person name="Venter J.C."/>
        </authorList>
    </citation>
    <scope>NUCLEOTIDE SEQUENCE [LARGE SCALE GENOMIC DNA]</scope>
    <source>
        <strain>cv. Columbia</strain>
    </source>
</reference>
<reference key="2">
    <citation type="journal article" date="2017" name="Plant J.">
        <title>Araport11: a complete reannotation of the Arabidopsis thaliana reference genome.</title>
        <authorList>
            <person name="Cheng C.Y."/>
            <person name="Krishnakumar V."/>
            <person name="Chan A.P."/>
            <person name="Thibaud-Nissen F."/>
            <person name="Schobel S."/>
            <person name="Town C.D."/>
        </authorList>
    </citation>
    <scope>GENOME REANNOTATION</scope>
    <source>
        <strain>cv. Columbia</strain>
    </source>
</reference>
<reference key="3">
    <citation type="journal article" date="2003" name="Science">
        <title>Empirical analysis of transcriptional activity in the Arabidopsis genome.</title>
        <authorList>
            <person name="Yamada K."/>
            <person name="Lim J."/>
            <person name="Dale J.M."/>
            <person name="Chen H."/>
            <person name="Shinn P."/>
            <person name="Palm C.J."/>
            <person name="Southwick A.M."/>
            <person name="Wu H.C."/>
            <person name="Kim C.J."/>
            <person name="Nguyen M."/>
            <person name="Pham P.K."/>
            <person name="Cheuk R.F."/>
            <person name="Karlin-Newmann G."/>
            <person name="Liu S.X."/>
            <person name="Lam B."/>
            <person name="Sakano H."/>
            <person name="Wu T."/>
            <person name="Yu G."/>
            <person name="Miranda M."/>
            <person name="Quach H.L."/>
            <person name="Tripp M."/>
            <person name="Chang C.H."/>
            <person name="Lee J.M."/>
            <person name="Toriumi M.J."/>
            <person name="Chan M.M."/>
            <person name="Tang C.C."/>
            <person name="Onodera C.S."/>
            <person name="Deng J.M."/>
            <person name="Akiyama K."/>
            <person name="Ansari Y."/>
            <person name="Arakawa T."/>
            <person name="Banh J."/>
            <person name="Banno F."/>
            <person name="Bowser L."/>
            <person name="Brooks S.Y."/>
            <person name="Carninci P."/>
            <person name="Chao Q."/>
            <person name="Choy N."/>
            <person name="Enju A."/>
            <person name="Goldsmith A.D."/>
            <person name="Gurjal M."/>
            <person name="Hansen N.F."/>
            <person name="Hayashizaki Y."/>
            <person name="Johnson-Hopson C."/>
            <person name="Hsuan V.W."/>
            <person name="Iida K."/>
            <person name="Karnes M."/>
            <person name="Khan S."/>
            <person name="Koesema E."/>
            <person name="Ishida J."/>
            <person name="Jiang P.X."/>
            <person name="Jones T."/>
            <person name="Kawai J."/>
            <person name="Kamiya A."/>
            <person name="Meyers C."/>
            <person name="Nakajima M."/>
            <person name="Narusaka M."/>
            <person name="Seki M."/>
            <person name="Sakurai T."/>
            <person name="Satou M."/>
            <person name="Tamse R."/>
            <person name="Vaysberg M."/>
            <person name="Wallender E.K."/>
            <person name="Wong C."/>
            <person name="Yamamura Y."/>
            <person name="Yuan S."/>
            <person name="Shinozaki K."/>
            <person name="Davis R.W."/>
            <person name="Theologis A."/>
            <person name="Ecker J.R."/>
        </authorList>
    </citation>
    <scope>NUCLEOTIDE SEQUENCE [LARGE SCALE MRNA]</scope>
    <source>
        <strain>cv. Columbia</strain>
    </source>
</reference>
<reference key="4">
    <citation type="submission" date="2005-02" db="EMBL/GenBank/DDBJ databases">
        <title>Arabidopsis ORF clones.</title>
        <authorList>
            <person name="Kim C.J."/>
            <person name="Chen H."/>
            <person name="Cheuk R.F."/>
            <person name="Shinn P."/>
            <person name="Ecker J.R."/>
        </authorList>
    </citation>
    <scope>NUCLEOTIDE SEQUENCE [LARGE SCALE MRNA]</scope>
    <source>
        <strain>cv. Columbia</strain>
    </source>
</reference>
<reference key="5">
    <citation type="journal article" date="2008" name="Trends Plant Sci.">
        <title>The plant B3 superfamily.</title>
        <authorList>
            <person name="Swaminathan K."/>
            <person name="Peterson K."/>
            <person name="Jack T."/>
        </authorList>
    </citation>
    <scope>GENE FAMILY</scope>
</reference>
<dbReference type="EMBL" id="AC004667">
    <property type="protein sequence ID" value="AAC61807.1"/>
    <property type="status" value="ALT_SEQ"/>
    <property type="molecule type" value="Genomic_DNA"/>
</dbReference>
<dbReference type="EMBL" id="CP002685">
    <property type="protein sequence ID" value="AEC09092.1"/>
    <property type="molecule type" value="Genomic_DNA"/>
</dbReference>
<dbReference type="EMBL" id="BT002032">
    <property type="protein sequence ID" value="AAN72043.1"/>
    <property type="molecule type" value="mRNA"/>
</dbReference>
<dbReference type="EMBL" id="BT020353">
    <property type="protein sequence ID" value="AAV85708.1"/>
    <property type="molecule type" value="mRNA"/>
</dbReference>
<dbReference type="EMBL" id="BT021085">
    <property type="protein sequence ID" value="AAX12855.1"/>
    <property type="molecule type" value="mRNA"/>
</dbReference>
<dbReference type="PIR" id="A84767">
    <property type="entry name" value="A84767"/>
</dbReference>
<dbReference type="RefSeq" id="NP_181074.2">
    <property type="nucleotide sequence ID" value="NM_129083.4"/>
</dbReference>
<dbReference type="SMR" id="Q5PNU4"/>
<dbReference type="BioGRID" id="3444">
    <property type="interactions" value="2"/>
</dbReference>
<dbReference type="FunCoup" id="Q5PNU4">
    <property type="interactions" value="60"/>
</dbReference>
<dbReference type="IntAct" id="Q5PNU4">
    <property type="interactions" value="3"/>
</dbReference>
<dbReference type="STRING" id="3702.Q5PNU4"/>
<dbReference type="PaxDb" id="3702-AT2G35310.1"/>
<dbReference type="EnsemblPlants" id="AT2G35310.1">
    <property type="protein sequence ID" value="AT2G35310.1"/>
    <property type="gene ID" value="AT2G35310"/>
</dbReference>
<dbReference type="GeneID" id="818098"/>
<dbReference type="Gramene" id="AT2G35310.1">
    <property type="protein sequence ID" value="AT2G35310.1"/>
    <property type="gene ID" value="AT2G35310"/>
</dbReference>
<dbReference type="KEGG" id="ath:AT2G35310"/>
<dbReference type="Araport" id="AT2G35310"/>
<dbReference type="TAIR" id="AT2G35310">
    <property type="gene designation" value="REM23"/>
</dbReference>
<dbReference type="HOGENOM" id="CLU_083136_0_0_1"/>
<dbReference type="InParanoid" id="Q5PNU4"/>
<dbReference type="OMA" id="MKIKARW"/>
<dbReference type="OrthoDB" id="590488at2759"/>
<dbReference type="PhylomeDB" id="Q5PNU4"/>
<dbReference type="PRO" id="PR:Q5PNU4"/>
<dbReference type="Proteomes" id="UP000006548">
    <property type="component" value="Chromosome 2"/>
</dbReference>
<dbReference type="ExpressionAtlas" id="Q5PNU4">
    <property type="expression patterns" value="baseline and differential"/>
</dbReference>
<dbReference type="GO" id="GO:0005634">
    <property type="term" value="C:nucleus"/>
    <property type="evidence" value="ECO:0007669"/>
    <property type="project" value="UniProtKB-SubCell"/>
</dbReference>
<dbReference type="GO" id="GO:0003677">
    <property type="term" value="F:DNA binding"/>
    <property type="evidence" value="ECO:0007669"/>
    <property type="project" value="UniProtKB-KW"/>
</dbReference>
<dbReference type="CDD" id="cd10017">
    <property type="entry name" value="B3_DNA"/>
    <property type="match status" value="1"/>
</dbReference>
<dbReference type="Gene3D" id="2.40.330.10">
    <property type="entry name" value="DNA-binding pseudobarrel domain"/>
    <property type="match status" value="2"/>
</dbReference>
<dbReference type="InterPro" id="IPR003340">
    <property type="entry name" value="B3_DNA-bd"/>
</dbReference>
<dbReference type="InterPro" id="IPR015300">
    <property type="entry name" value="DNA-bd_pseudobarrel_sf"/>
</dbReference>
<dbReference type="InterPro" id="IPR050655">
    <property type="entry name" value="Plant_B3_domain"/>
</dbReference>
<dbReference type="PANTHER" id="PTHR31920">
    <property type="entry name" value="B3 DOMAIN-CONTAINING"/>
    <property type="match status" value="1"/>
</dbReference>
<dbReference type="PANTHER" id="PTHR31920:SF122">
    <property type="entry name" value="B3 DOMAIN-CONTAINING PROTEIN REM23"/>
    <property type="match status" value="1"/>
</dbReference>
<dbReference type="Pfam" id="PF02362">
    <property type="entry name" value="B3"/>
    <property type="match status" value="1"/>
</dbReference>
<dbReference type="SMART" id="SM01019">
    <property type="entry name" value="B3"/>
    <property type="match status" value="2"/>
</dbReference>
<dbReference type="SUPFAM" id="SSF101936">
    <property type="entry name" value="DNA-binding pseudobarrel domain"/>
    <property type="match status" value="2"/>
</dbReference>
<dbReference type="PROSITE" id="PS50863">
    <property type="entry name" value="B3"/>
    <property type="match status" value="2"/>
</dbReference>
<organism>
    <name type="scientific">Arabidopsis thaliana</name>
    <name type="common">Mouse-ear cress</name>
    <dbReference type="NCBI Taxonomy" id="3702"/>
    <lineage>
        <taxon>Eukaryota</taxon>
        <taxon>Viridiplantae</taxon>
        <taxon>Streptophyta</taxon>
        <taxon>Embryophyta</taxon>
        <taxon>Tracheophyta</taxon>
        <taxon>Spermatophyta</taxon>
        <taxon>Magnoliopsida</taxon>
        <taxon>eudicotyledons</taxon>
        <taxon>Gunneridae</taxon>
        <taxon>Pentapetalae</taxon>
        <taxon>rosids</taxon>
        <taxon>malvids</taxon>
        <taxon>Brassicales</taxon>
        <taxon>Brassicaceae</taxon>
        <taxon>Camelineae</taxon>
        <taxon>Arabidopsis</taxon>
    </lineage>
</organism>
<gene>
    <name type="ordered locus">At2g35310</name>
    <name type="ORF">T4C15.2</name>
</gene>
<keyword id="KW-0238">DNA-binding</keyword>
<keyword id="KW-0539">Nucleus</keyword>
<keyword id="KW-1185">Reference proteome</keyword>
<keyword id="KW-0677">Repeat</keyword>
<keyword id="KW-0804">Transcription</keyword>
<keyword id="KW-0805">Transcription regulation</keyword>
<name>Y2531_ARATH</name>
<evidence type="ECO:0000255" key="1">
    <source>
        <dbReference type="PROSITE-ProRule" id="PRU00326"/>
    </source>
</evidence>
<evidence type="ECO:0000305" key="2"/>
<sequence>MARNSDNDMCKEERKRESFFKVLQRVDISSENMRALPYDFVRSFSNNELSRKMKIKARWGSSWEVEICKNPRFYFMEKSGWEKFVSDNALGASEFLTFTHKGNMRFTVNIFMQDGKEMLQPPQSMSFMASSRPPKREQGIPSLATTIAAESNGGGNYKRKLNFEKKKAEESHNSKRTDKVFSVQRESAGASSSSVAEFSMFIKKSYLIYMWFPKSVQSIHMPKQRTIFKIHHPNMKKSWNVVYVVSGTKSSFSAGWKGLAQEYPLAVGDTCKFSFIKQHELILFVSKP</sequence>